<keyword id="KW-0021">Allosteric enzyme</keyword>
<keyword id="KW-0067">ATP-binding</keyword>
<keyword id="KW-0963">Cytoplasm</keyword>
<keyword id="KW-0324">Glycolysis</keyword>
<keyword id="KW-0418">Kinase</keyword>
<keyword id="KW-0460">Magnesium</keyword>
<keyword id="KW-0479">Metal-binding</keyword>
<keyword id="KW-0547">Nucleotide-binding</keyword>
<keyword id="KW-0808">Transferase</keyword>
<name>PFKA_YERPY</name>
<gene>
    <name evidence="1" type="primary">pfkA</name>
    <name type="ordered locus">YPK_4126</name>
</gene>
<evidence type="ECO:0000255" key="1">
    <source>
        <dbReference type="HAMAP-Rule" id="MF_00339"/>
    </source>
</evidence>
<comment type="function">
    <text evidence="1">Catalyzes the phosphorylation of D-fructose 6-phosphate to fructose 1,6-bisphosphate by ATP, the first committing step of glycolysis.</text>
</comment>
<comment type="catalytic activity">
    <reaction evidence="1">
        <text>beta-D-fructose 6-phosphate + ATP = beta-D-fructose 1,6-bisphosphate + ADP + H(+)</text>
        <dbReference type="Rhea" id="RHEA:16109"/>
        <dbReference type="ChEBI" id="CHEBI:15378"/>
        <dbReference type="ChEBI" id="CHEBI:30616"/>
        <dbReference type="ChEBI" id="CHEBI:32966"/>
        <dbReference type="ChEBI" id="CHEBI:57634"/>
        <dbReference type="ChEBI" id="CHEBI:456216"/>
        <dbReference type="EC" id="2.7.1.11"/>
    </reaction>
</comment>
<comment type="cofactor">
    <cofactor evidence="1">
        <name>Mg(2+)</name>
        <dbReference type="ChEBI" id="CHEBI:18420"/>
    </cofactor>
</comment>
<comment type="activity regulation">
    <text evidence="1">Allosterically activated by ADP and other diphosphonucleosides, and allosterically inhibited by phosphoenolpyruvate.</text>
</comment>
<comment type="pathway">
    <text evidence="1">Carbohydrate degradation; glycolysis; D-glyceraldehyde 3-phosphate and glycerone phosphate from D-glucose: step 3/4.</text>
</comment>
<comment type="subunit">
    <text evidence="1">Homotetramer.</text>
</comment>
<comment type="subcellular location">
    <subcellularLocation>
        <location evidence="1">Cytoplasm</location>
    </subcellularLocation>
</comment>
<comment type="similarity">
    <text evidence="1">Belongs to the phosphofructokinase type A (PFKA) family. ATP-dependent PFK group I subfamily. Prokaryotic clade 'B1' sub-subfamily.</text>
</comment>
<organism>
    <name type="scientific">Yersinia pseudotuberculosis serotype O:3 (strain YPIII)</name>
    <dbReference type="NCBI Taxonomy" id="502800"/>
    <lineage>
        <taxon>Bacteria</taxon>
        <taxon>Pseudomonadati</taxon>
        <taxon>Pseudomonadota</taxon>
        <taxon>Gammaproteobacteria</taxon>
        <taxon>Enterobacterales</taxon>
        <taxon>Yersiniaceae</taxon>
        <taxon>Yersinia</taxon>
    </lineage>
</organism>
<dbReference type="EC" id="2.7.1.11" evidence="1"/>
<dbReference type="EMBL" id="CP000950">
    <property type="protein sequence ID" value="ACA70385.1"/>
    <property type="molecule type" value="Genomic_DNA"/>
</dbReference>
<dbReference type="RefSeq" id="WP_011191458.1">
    <property type="nucleotide sequence ID" value="NZ_CP009792.1"/>
</dbReference>
<dbReference type="SMR" id="B1JQU4"/>
<dbReference type="GeneID" id="49787956"/>
<dbReference type="KEGG" id="ypy:YPK_4126"/>
<dbReference type="PATRIC" id="fig|502800.11.peg.476"/>
<dbReference type="UniPathway" id="UPA00109">
    <property type="reaction ID" value="UER00182"/>
</dbReference>
<dbReference type="GO" id="GO:0005945">
    <property type="term" value="C:6-phosphofructokinase complex"/>
    <property type="evidence" value="ECO:0007669"/>
    <property type="project" value="TreeGrafter"/>
</dbReference>
<dbReference type="GO" id="GO:0003872">
    <property type="term" value="F:6-phosphofructokinase activity"/>
    <property type="evidence" value="ECO:0007669"/>
    <property type="project" value="UniProtKB-UniRule"/>
</dbReference>
<dbReference type="GO" id="GO:0016208">
    <property type="term" value="F:AMP binding"/>
    <property type="evidence" value="ECO:0007669"/>
    <property type="project" value="TreeGrafter"/>
</dbReference>
<dbReference type="GO" id="GO:0005524">
    <property type="term" value="F:ATP binding"/>
    <property type="evidence" value="ECO:0007669"/>
    <property type="project" value="UniProtKB-KW"/>
</dbReference>
<dbReference type="GO" id="GO:0070095">
    <property type="term" value="F:fructose-6-phosphate binding"/>
    <property type="evidence" value="ECO:0007669"/>
    <property type="project" value="TreeGrafter"/>
</dbReference>
<dbReference type="GO" id="GO:0042802">
    <property type="term" value="F:identical protein binding"/>
    <property type="evidence" value="ECO:0007669"/>
    <property type="project" value="TreeGrafter"/>
</dbReference>
<dbReference type="GO" id="GO:0046872">
    <property type="term" value="F:metal ion binding"/>
    <property type="evidence" value="ECO:0007669"/>
    <property type="project" value="UniProtKB-KW"/>
</dbReference>
<dbReference type="GO" id="GO:0048029">
    <property type="term" value="F:monosaccharide binding"/>
    <property type="evidence" value="ECO:0007669"/>
    <property type="project" value="TreeGrafter"/>
</dbReference>
<dbReference type="GO" id="GO:0061621">
    <property type="term" value="P:canonical glycolysis"/>
    <property type="evidence" value="ECO:0007669"/>
    <property type="project" value="TreeGrafter"/>
</dbReference>
<dbReference type="GO" id="GO:0030388">
    <property type="term" value="P:fructose 1,6-bisphosphate metabolic process"/>
    <property type="evidence" value="ECO:0007669"/>
    <property type="project" value="TreeGrafter"/>
</dbReference>
<dbReference type="GO" id="GO:0006002">
    <property type="term" value="P:fructose 6-phosphate metabolic process"/>
    <property type="evidence" value="ECO:0007669"/>
    <property type="project" value="InterPro"/>
</dbReference>
<dbReference type="FunFam" id="3.40.50.450:FF:000001">
    <property type="entry name" value="ATP-dependent 6-phosphofructokinase"/>
    <property type="match status" value="1"/>
</dbReference>
<dbReference type="FunFam" id="3.40.50.460:FF:000002">
    <property type="entry name" value="ATP-dependent 6-phosphofructokinase"/>
    <property type="match status" value="1"/>
</dbReference>
<dbReference type="Gene3D" id="3.40.50.450">
    <property type="match status" value="1"/>
</dbReference>
<dbReference type="Gene3D" id="3.40.50.460">
    <property type="entry name" value="Phosphofructokinase domain"/>
    <property type="match status" value="1"/>
</dbReference>
<dbReference type="HAMAP" id="MF_00339">
    <property type="entry name" value="Phosphofructokinase_I_B1"/>
    <property type="match status" value="1"/>
</dbReference>
<dbReference type="InterPro" id="IPR022953">
    <property type="entry name" value="ATP_PFK"/>
</dbReference>
<dbReference type="InterPro" id="IPR012003">
    <property type="entry name" value="ATP_PFK_prok-type"/>
</dbReference>
<dbReference type="InterPro" id="IPR012828">
    <property type="entry name" value="PFKA_ATP_prok"/>
</dbReference>
<dbReference type="InterPro" id="IPR015912">
    <property type="entry name" value="Phosphofructokinase_CS"/>
</dbReference>
<dbReference type="InterPro" id="IPR000023">
    <property type="entry name" value="Phosphofructokinase_dom"/>
</dbReference>
<dbReference type="InterPro" id="IPR035966">
    <property type="entry name" value="PKF_sf"/>
</dbReference>
<dbReference type="NCBIfam" id="TIGR02482">
    <property type="entry name" value="PFKA_ATP"/>
    <property type="match status" value="1"/>
</dbReference>
<dbReference type="NCBIfam" id="NF002872">
    <property type="entry name" value="PRK03202.1"/>
    <property type="match status" value="1"/>
</dbReference>
<dbReference type="PANTHER" id="PTHR13697:SF4">
    <property type="entry name" value="ATP-DEPENDENT 6-PHOSPHOFRUCTOKINASE"/>
    <property type="match status" value="1"/>
</dbReference>
<dbReference type="PANTHER" id="PTHR13697">
    <property type="entry name" value="PHOSPHOFRUCTOKINASE"/>
    <property type="match status" value="1"/>
</dbReference>
<dbReference type="Pfam" id="PF00365">
    <property type="entry name" value="PFK"/>
    <property type="match status" value="1"/>
</dbReference>
<dbReference type="PIRSF" id="PIRSF000532">
    <property type="entry name" value="ATP_PFK_prok"/>
    <property type="match status" value="1"/>
</dbReference>
<dbReference type="PRINTS" id="PR00476">
    <property type="entry name" value="PHFRCTKINASE"/>
</dbReference>
<dbReference type="SUPFAM" id="SSF53784">
    <property type="entry name" value="Phosphofructokinase"/>
    <property type="match status" value="1"/>
</dbReference>
<dbReference type="PROSITE" id="PS00433">
    <property type="entry name" value="PHOSPHOFRUCTOKINASE"/>
    <property type="match status" value="1"/>
</dbReference>
<protein>
    <recommendedName>
        <fullName evidence="1">ATP-dependent 6-phosphofructokinase</fullName>
        <shortName evidence="1">ATP-PFK</shortName>
        <shortName evidence="1">Phosphofructokinase</shortName>
        <ecNumber evidence="1">2.7.1.11</ecNumber>
    </recommendedName>
    <alternativeName>
        <fullName evidence="1">Phosphohexokinase</fullName>
    </alternativeName>
</protein>
<accession>B1JQU4</accession>
<proteinExistence type="inferred from homology"/>
<feature type="chain" id="PRO_1000120070" description="ATP-dependent 6-phosphofructokinase">
    <location>
        <begin position="1"/>
        <end position="327"/>
    </location>
</feature>
<feature type="active site" description="Proton acceptor" evidence="1">
    <location>
        <position position="129"/>
    </location>
</feature>
<feature type="binding site" evidence="1">
    <location>
        <position position="12"/>
    </location>
    <ligand>
        <name>ATP</name>
        <dbReference type="ChEBI" id="CHEBI:30616"/>
    </ligand>
</feature>
<feature type="binding site" evidence="1">
    <location>
        <begin position="22"/>
        <end position="26"/>
    </location>
    <ligand>
        <name>ADP</name>
        <dbReference type="ChEBI" id="CHEBI:456216"/>
        <note>allosteric activator; ligand shared between dimeric partners</note>
    </ligand>
</feature>
<feature type="binding site" evidence="1">
    <location>
        <begin position="55"/>
        <end position="60"/>
    </location>
    <ligand>
        <name>ADP</name>
        <dbReference type="ChEBI" id="CHEBI:456216"/>
        <note>allosteric activator; ligand shared between dimeric partners</note>
    </ligand>
</feature>
<feature type="binding site" evidence="1">
    <location>
        <begin position="73"/>
        <end position="74"/>
    </location>
    <ligand>
        <name>ATP</name>
        <dbReference type="ChEBI" id="CHEBI:30616"/>
    </ligand>
</feature>
<feature type="binding site" evidence="1">
    <location>
        <begin position="103"/>
        <end position="106"/>
    </location>
    <ligand>
        <name>ATP</name>
        <dbReference type="ChEBI" id="CHEBI:30616"/>
    </ligand>
</feature>
<feature type="binding site" evidence="1">
    <location>
        <position position="104"/>
    </location>
    <ligand>
        <name>Mg(2+)</name>
        <dbReference type="ChEBI" id="CHEBI:18420"/>
        <note>catalytic</note>
    </ligand>
</feature>
<feature type="binding site" description="in other chain" evidence="1">
    <location>
        <begin position="127"/>
        <end position="129"/>
    </location>
    <ligand>
        <name>substrate</name>
        <note>ligand shared between dimeric partners</note>
    </ligand>
</feature>
<feature type="binding site" description="in other chain" evidence="1">
    <location>
        <position position="156"/>
    </location>
    <ligand>
        <name>ADP</name>
        <dbReference type="ChEBI" id="CHEBI:456216"/>
        <note>allosteric activator; ligand shared between dimeric partners</note>
    </ligand>
</feature>
<feature type="binding site" evidence="1">
    <location>
        <position position="164"/>
    </location>
    <ligand>
        <name>substrate</name>
        <note>ligand shared between dimeric partners</note>
    </ligand>
</feature>
<feature type="binding site" description="in other chain" evidence="1">
    <location>
        <begin position="171"/>
        <end position="173"/>
    </location>
    <ligand>
        <name>substrate</name>
        <note>ligand shared between dimeric partners</note>
    </ligand>
</feature>
<feature type="binding site" description="in other chain" evidence="1">
    <location>
        <begin position="187"/>
        <end position="189"/>
    </location>
    <ligand>
        <name>ADP</name>
        <dbReference type="ChEBI" id="CHEBI:456216"/>
        <note>allosteric activator; ligand shared between dimeric partners</note>
    </ligand>
</feature>
<feature type="binding site" description="in other chain" evidence="1">
    <location>
        <position position="213"/>
    </location>
    <ligand>
        <name>ADP</name>
        <dbReference type="ChEBI" id="CHEBI:456216"/>
        <note>allosteric activator; ligand shared between dimeric partners</note>
    </ligand>
</feature>
<feature type="binding site" description="in other chain" evidence="1">
    <location>
        <begin position="215"/>
        <end position="217"/>
    </location>
    <ligand>
        <name>ADP</name>
        <dbReference type="ChEBI" id="CHEBI:456216"/>
        <note>allosteric activator; ligand shared between dimeric partners</note>
    </ligand>
</feature>
<feature type="binding site" description="in other chain" evidence="1">
    <location>
        <position position="224"/>
    </location>
    <ligand>
        <name>substrate</name>
        <note>ligand shared between dimeric partners</note>
    </ligand>
</feature>
<feature type="binding site" evidence="1">
    <location>
        <position position="245"/>
    </location>
    <ligand>
        <name>substrate</name>
        <note>ligand shared between dimeric partners</note>
    </ligand>
</feature>
<feature type="binding site" description="in other chain" evidence="1">
    <location>
        <begin position="251"/>
        <end position="254"/>
    </location>
    <ligand>
        <name>substrate</name>
        <note>ligand shared between dimeric partners</note>
    </ligand>
</feature>
<sequence length="327" mass="35411">MVKKIGVLTSGGDAPGMNAAIRGVVRAALSAGLDVFGIEDGYLGLYENRMKKLDRYSVSDMINRGGTFLGSARFPEFRDPEVRKVALKNMHERGIDGLVVIGGDGSYAGADLLTKEGGIHCVGLPGTIDNDVAGTDYTIGFFTALETVVEAIDRLRDTSSSHQRISIVEVMGRYCGDLTLAAAIAGGCEFIAIPEVEFKRDDLVAEIKAGIAKGKKHAIVAITEKLDDIDSLAKYIEKETGRETRGTVLGHIQRGGAPVAYDRILASRMGSYAVDLLLQDHDYKKGGFCVGVQNEKMVHELISVCIAPENKKSKFKEDWYDTAKKLF</sequence>
<reference key="1">
    <citation type="submission" date="2008-02" db="EMBL/GenBank/DDBJ databases">
        <title>Complete sequence of Yersinia pseudotuberculosis YPIII.</title>
        <authorList>
            <consortium name="US DOE Joint Genome Institute"/>
            <person name="Copeland A."/>
            <person name="Lucas S."/>
            <person name="Lapidus A."/>
            <person name="Glavina del Rio T."/>
            <person name="Dalin E."/>
            <person name="Tice H."/>
            <person name="Bruce D."/>
            <person name="Goodwin L."/>
            <person name="Pitluck S."/>
            <person name="Munk A.C."/>
            <person name="Brettin T."/>
            <person name="Detter J.C."/>
            <person name="Han C."/>
            <person name="Tapia R."/>
            <person name="Schmutz J."/>
            <person name="Larimer F."/>
            <person name="Land M."/>
            <person name="Hauser L."/>
            <person name="Challacombe J.F."/>
            <person name="Green L."/>
            <person name="Lindler L.E."/>
            <person name="Nikolich M.P."/>
            <person name="Richardson P."/>
        </authorList>
    </citation>
    <scope>NUCLEOTIDE SEQUENCE [LARGE SCALE GENOMIC DNA]</scope>
    <source>
        <strain>YPIII</strain>
    </source>
</reference>